<comment type="catalytic activity">
    <reaction evidence="1">
        <text>(R)-pantothenate + ATP = (R)-4'-phosphopantothenate + ADP + H(+)</text>
        <dbReference type="Rhea" id="RHEA:16373"/>
        <dbReference type="ChEBI" id="CHEBI:10986"/>
        <dbReference type="ChEBI" id="CHEBI:15378"/>
        <dbReference type="ChEBI" id="CHEBI:29032"/>
        <dbReference type="ChEBI" id="CHEBI:30616"/>
        <dbReference type="ChEBI" id="CHEBI:456216"/>
        <dbReference type="EC" id="2.7.1.33"/>
    </reaction>
</comment>
<comment type="pathway">
    <text evidence="1">Cofactor biosynthesis; coenzyme A biosynthesis; CoA from (R)-pantothenate: step 1/5.</text>
</comment>
<comment type="subcellular location">
    <subcellularLocation>
        <location evidence="1">Cytoplasm</location>
    </subcellularLocation>
</comment>
<comment type="similarity">
    <text evidence="1">Belongs to the prokaryotic pantothenate kinase family.</text>
</comment>
<evidence type="ECO:0000255" key="1">
    <source>
        <dbReference type="HAMAP-Rule" id="MF_00215"/>
    </source>
</evidence>
<keyword id="KW-0067">ATP-binding</keyword>
<keyword id="KW-0173">Coenzyme A biosynthesis</keyword>
<keyword id="KW-0963">Cytoplasm</keyword>
<keyword id="KW-0418">Kinase</keyword>
<keyword id="KW-0547">Nucleotide-binding</keyword>
<keyword id="KW-0808">Transferase</keyword>
<dbReference type="EC" id="2.7.1.33" evidence="1"/>
<dbReference type="EMBL" id="AP008232">
    <property type="protein sequence ID" value="BAE73401.1"/>
    <property type="molecule type" value="Genomic_DNA"/>
</dbReference>
<dbReference type="RefSeq" id="WP_011409991.1">
    <property type="nucleotide sequence ID" value="NC_007712.1"/>
</dbReference>
<dbReference type="SMR" id="Q2NWS4"/>
<dbReference type="STRING" id="343509.SG0126"/>
<dbReference type="KEGG" id="sgl:SG0126"/>
<dbReference type="eggNOG" id="COG1072">
    <property type="taxonomic scope" value="Bacteria"/>
</dbReference>
<dbReference type="HOGENOM" id="CLU_053818_1_1_6"/>
<dbReference type="OrthoDB" id="1550976at2"/>
<dbReference type="UniPathway" id="UPA00241">
    <property type="reaction ID" value="UER00352"/>
</dbReference>
<dbReference type="Proteomes" id="UP000001932">
    <property type="component" value="Chromosome"/>
</dbReference>
<dbReference type="GO" id="GO:0005737">
    <property type="term" value="C:cytoplasm"/>
    <property type="evidence" value="ECO:0007669"/>
    <property type="project" value="UniProtKB-SubCell"/>
</dbReference>
<dbReference type="GO" id="GO:0005524">
    <property type="term" value="F:ATP binding"/>
    <property type="evidence" value="ECO:0007669"/>
    <property type="project" value="UniProtKB-UniRule"/>
</dbReference>
<dbReference type="GO" id="GO:0004594">
    <property type="term" value="F:pantothenate kinase activity"/>
    <property type="evidence" value="ECO:0007669"/>
    <property type="project" value="UniProtKB-UniRule"/>
</dbReference>
<dbReference type="GO" id="GO:0015937">
    <property type="term" value="P:coenzyme A biosynthetic process"/>
    <property type="evidence" value="ECO:0007669"/>
    <property type="project" value="UniProtKB-UniRule"/>
</dbReference>
<dbReference type="CDD" id="cd02025">
    <property type="entry name" value="PanK"/>
    <property type="match status" value="1"/>
</dbReference>
<dbReference type="FunFam" id="3.40.50.300:FF:000242">
    <property type="entry name" value="Pantothenate kinase"/>
    <property type="match status" value="1"/>
</dbReference>
<dbReference type="Gene3D" id="3.40.50.300">
    <property type="entry name" value="P-loop containing nucleotide triphosphate hydrolases"/>
    <property type="match status" value="1"/>
</dbReference>
<dbReference type="HAMAP" id="MF_00215">
    <property type="entry name" value="Pantothen_kinase_1"/>
    <property type="match status" value="1"/>
</dbReference>
<dbReference type="InterPro" id="IPR027417">
    <property type="entry name" value="P-loop_NTPase"/>
</dbReference>
<dbReference type="InterPro" id="IPR004566">
    <property type="entry name" value="PanK"/>
</dbReference>
<dbReference type="InterPro" id="IPR006083">
    <property type="entry name" value="PRK/URK"/>
</dbReference>
<dbReference type="NCBIfam" id="TIGR00554">
    <property type="entry name" value="panK_bact"/>
    <property type="match status" value="1"/>
</dbReference>
<dbReference type="PANTHER" id="PTHR10285">
    <property type="entry name" value="URIDINE KINASE"/>
    <property type="match status" value="1"/>
</dbReference>
<dbReference type="Pfam" id="PF00485">
    <property type="entry name" value="PRK"/>
    <property type="match status" value="1"/>
</dbReference>
<dbReference type="PIRSF" id="PIRSF000545">
    <property type="entry name" value="Pantothenate_kin"/>
    <property type="match status" value="1"/>
</dbReference>
<dbReference type="SUPFAM" id="SSF52540">
    <property type="entry name" value="P-loop containing nucleoside triphosphate hydrolases"/>
    <property type="match status" value="1"/>
</dbReference>
<reference key="1">
    <citation type="journal article" date="2006" name="Genome Res.">
        <title>Massive genome erosion and functional adaptations provide insights into the symbiotic lifestyle of Sodalis glossinidius in the tsetse host.</title>
        <authorList>
            <person name="Toh H."/>
            <person name="Weiss B.L."/>
            <person name="Perkin S.A.H."/>
            <person name="Yamashita A."/>
            <person name="Oshima K."/>
            <person name="Hattori M."/>
            <person name="Aksoy S."/>
        </authorList>
    </citation>
    <scope>NUCLEOTIDE SEQUENCE [LARGE SCALE GENOMIC DNA]</scope>
    <source>
        <strain>morsitans</strain>
    </source>
</reference>
<feature type="chain" id="PRO_1000043261" description="Pantothenate kinase">
    <location>
        <begin position="1"/>
        <end position="316"/>
    </location>
</feature>
<feature type="binding site" evidence="1">
    <location>
        <begin position="95"/>
        <end position="102"/>
    </location>
    <ligand>
        <name>ATP</name>
        <dbReference type="ChEBI" id="CHEBI:30616"/>
    </ligand>
</feature>
<gene>
    <name evidence="1" type="primary">coaA</name>
    <name type="ordered locus">SG0126</name>
</gene>
<proteinExistence type="inferred from homology"/>
<organism>
    <name type="scientific">Sodalis glossinidius (strain morsitans)</name>
    <dbReference type="NCBI Taxonomy" id="343509"/>
    <lineage>
        <taxon>Bacteria</taxon>
        <taxon>Pseudomonadati</taxon>
        <taxon>Pseudomonadota</taxon>
        <taxon>Gammaproteobacteria</taxon>
        <taxon>Enterobacterales</taxon>
        <taxon>Bruguierivoracaceae</taxon>
        <taxon>Sodalis</taxon>
    </lineage>
</organism>
<sequence>MIKAVQSPPTPYLQFSRKQWAALRNSVPLTLTEAEIVNLKGINEDLSLEEVAEIYLPLSRLLNFYISSNLRRQAVLEQFLGTDGQRIPYIIGIAGSVAVGKSTTARVLQALLSRWPEHRTVELVTTDGFLHPNSVLKQRDLMKKKGFPESYDIRSLVNFVSKVKSGTPRVTAPVYSHLIYDVVPDEQKVISQPDILILEGLNVLQSGSDYNHDPHHVFVSDFVDFSIYVDAPETLLQSWYINRFLKFRQGAFSDPDSYFHHYSQLSEQEAVAIASQLWSEINGRNLQQNILPTRERASLILGKSANHAVERVRLRK</sequence>
<accession>Q2NWS4</accession>
<protein>
    <recommendedName>
        <fullName evidence="1">Pantothenate kinase</fullName>
        <ecNumber evidence="1">2.7.1.33</ecNumber>
    </recommendedName>
    <alternativeName>
        <fullName evidence="1">Pantothenic acid kinase</fullName>
    </alternativeName>
</protein>
<name>COAA_SODGM</name>